<comment type="function">
    <text evidence="2 3 6">Non-catalytic subunit of the gamma-secretase complex, an endoprotease complex that catalyzes the intramembrane cleavage of integral membrane proteins such as Notch receptors and APP (amyloid-beta precursor protein) (PubMed:15634781, PubMed:19369254). Required for normal gamma-secretase assembly (PubMed:15634781, PubMed:19369254). The gamma-secretase complex plays a role in Notch and Wnt signaling cascades and regulation of downstream processes via its role in processing key regulatory proteins, and by regulating cytosolic CTNNB1 levels (Probable).</text>
</comment>
<comment type="subunit">
    <text evidence="2 3">The functional gamma-secretase complex is composed of at least four polypeptides: a presenilin homodimer (PSEN1 or PSEN2), nicastrin (NCSTN), APH1 (APH1A or APH1B) and PSENEN/PEN2.</text>
</comment>
<comment type="subcellular location">
    <subcellularLocation>
        <location evidence="1">Endoplasmic reticulum membrane</location>
        <topology evidence="1">Multi-pass membrane protein</topology>
    </subcellularLocation>
    <subcellularLocation>
        <location evidence="1">Golgi apparatus</location>
        <location evidence="1">Golgi stack membrane</location>
        <topology evidence="1">Multi-pass membrane protein</topology>
    </subcellularLocation>
    <text evidence="1">Predominantly located in the endoplasmic reticulum and in the cis-Golgi.</text>
</comment>
<comment type="alternative products">
    <event type="alternative splicing"/>
    <isoform>
        <id>Q8BVF7-1</id>
        <name>1</name>
        <sequence type="displayed"/>
    </isoform>
    <isoform>
        <id>Q8BVF7-2</id>
        <name>2</name>
        <sequence type="described" ref="VSP_008357 VSP_008358"/>
    </isoform>
</comment>
<comment type="disruption phenotype">
    <text evidence="2">Full embryonic lethality. No live homozygous embryos are present after 11 dpc.</text>
</comment>
<comment type="similarity">
    <text evidence="6">Belongs to the APH-1 family.</text>
</comment>
<feature type="chain" id="PRO_0000221051" description="Gamma-secretase subunit APH-1A">
    <location>
        <begin position="1"/>
        <end position="265"/>
    </location>
</feature>
<feature type="topological domain" description="Lumenal" evidence="1">
    <location>
        <begin position="1"/>
        <end position="2"/>
    </location>
</feature>
<feature type="transmembrane region" description="Helical; Name=1" evidence="1">
    <location>
        <begin position="3"/>
        <end position="23"/>
    </location>
</feature>
<feature type="topological domain" description="Cytoplasmic" evidence="1">
    <location>
        <begin position="24"/>
        <end position="31"/>
    </location>
</feature>
<feature type="transmembrane region" description="Helical; Name=2" evidence="1">
    <location>
        <begin position="32"/>
        <end position="52"/>
    </location>
</feature>
<feature type="topological domain" description="Lumenal" evidence="1">
    <location>
        <begin position="53"/>
        <end position="68"/>
    </location>
</feature>
<feature type="transmembrane region" description="Helical; Name=3" evidence="1">
    <location>
        <begin position="69"/>
        <end position="89"/>
    </location>
</feature>
<feature type="topological domain" description="Cytoplasmic" evidence="1">
    <location>
        <begin position="90"/>
        <end position="118"/>
    </location>
</feature>
<feature type="transmembrane region" description="Helical; Name=4" evidence="1">
    <location>
        <begin position="119"/>
        <end position="139"/>
    </location>
</feature>
<feature type="topological domain" description="Lumenal" evidence="1">
    <location>
        <begin position="140"/>
        <end position="158"/>
    </location>
</feature>
<feature type="transmembrane region" description="Helical; Name=5" evidence="1">
    <location>
        <begin position="159"/>
        <end position="179"/>
    </location>
</feature>
<feature type="topological domain" description="Cytoplasmic" evidence="1">
    <location>
        <begin position="180"/>
        <end position="186"/>
    </location>
</feature>
<feature type="transmembrane region" description="Helical; Name=6" evidence="1">
    <location>
        <begin position="187"/>
        <end position="207"/>
    </location>
</feature>
<feature type="topological domain" description="Lumenal" evidence="1">
    <location>
        <begin position="208"/>
        <end position="213"/>
    </location>
</feature>
<feature type="transmembrane region" description="Helical; Name=7" evidence="1">
    <location>
        <begin position="214"/>
        <end position="234"/>
    </location>
</feature>
<feature type="topological domain" description="Cytoplasmic" evidence="1">
    <location>
        <begin position="235"/>
        <end position="265"/>
    </location>
</feature>
<feature type="splice variant" id="VSP_008357" description="In isoform 2." evidence="4 5">
    <original>RR</original>
    <variation>KD</variation>
    <location>
        <begin position="246"/>
        <end position="247"/>
    </location>
</feature>
<feature type="splice variant" id="VSP_008358" description="In isoform 2." evidence="4 5">
    <location>
        <begin position="248"/>
        <end position="265"/>
    </location>
</feature>
<evidence type="ECO:0000250" key="1">
    <source>
        <dbReference type="UniProtKB" id="Q96BI3"/>
    </source>
</evidence>
<evidence type="ECO:0000269" key="2">
    <source>
    </source>
</evidence>
<evidence type="ECO:0000269" key="3">
    <source>
    </source>
</evidence>
<evidence type="ECO:0000303" key="4">
    <source>
    </source>
</evidence>
<evidence type="ECO:0000303" key="5">
    <source>
    </source>
</evidence>
<evidence type="ECO:0000305" key="6"/>
<protein>
    <recommendedName>
        <fullName>Gamma-secretase subunit APH-1A</fullName>
        <shortName>APH-1a</shortName>
    </recommendedName>
    <alternativeName>
        <fullName>Aph-1alpha</fullName>
    </alternativeName>
</protein>
<sequence length="265" mass="28986">MGAAVFFGCTFVAFGPAFSLFLITVAGDPLRVIILVAGAFFWLVSLLLASVVWFILVHVTDRSDARLQYGLLIFGAAVSVLLQEVFRFAYYKLLKKADEGLASLSEDGRSPISIRQMAYVSGLSFGIISGVFSVINILADALGPGVVGIHGDSPYYFLTSAFLTAAIILLHTFWGVVFFDACERRRYWALGLVVGSHLLTSGLTFLNPWYEASLLPIYAVTVSMGLWAFITAGGSLRSIQRSLSCRRQEDSRVMVYSALRIPPED</sequence>
<keyword id="KW-0025">Alternative splicing</keyword>
<keyword id="KW-0256">Endoplasmic reticulum</keyword>
<keyword id="KW-0333">Golgi apparatus</keyword>
<keyword id="KW-0472">Membrane</keyword>
<keyword id="KW-0914">Notch signaling pathway</keyword>
<keyword id="KW-1185">Reference proteome</keyword>
<keyword id="KW-0812">Transmembrane</keyword>
<keyword id="KW-1133">Transmembrane helix</keyword>
<proteinExistence type="evidence at protein level"/>
<accession>Q8BVF7</accession>
<accession>Q8R1T3</accession>
<accession>Q91VL5</accession>
<name>APH1A_MOUSE</name>
<organism>
    <name type="scientific">Mus musculus</name>
    <name type="common">Mouse</name>
    <dbReference type="NCBI Taxonomy" id="10090"/>
    <lineage>
        <taxon>Eukaryota</taxon>
        <taxon>Metazoa</taxon>
        <taxon>Chordata</taxon>
        <taxon>Craniata</taxon>
        <taxon>Vertebrata</taxon>
        <taxon>Euteleostomi</taxon>
        <taxon>Mammalia</taxon>
        <taxon>Eutheria</taxon>
        <taxon>Euarchontoglires</taxon>
        <taxon>Glires</taxon>
        <taxon>Rodentia</taxon>
        <taxon>Myomorpha</taxon>
        <taxon>Muroidea</taxon>
        <taxon>Muridae</taxon>
        <taxon>Murinae</taxon>
        <taxon>Mus</taxon>
        <taxon>Mus</taxon>
    </lineage>
</organism>
<dbReference type="EMBL" id="BC012406">
    <property type="protein sequence ID" value="AAH12406.1"/>
    <property type="molecule type" value="mRNA"/>
</dbReference>
<dbReference type="EMBL" id="BC024111">
    <property type="protein sequence ID" value="AAH24111.1"/>
    <property type="molecule type" value="mRNA"/>
</dbReference>
<dbReference type="EMBL" id="AK078343">
    <property type="protein sequence ID" value="BAC37228.1"/>
    <property type="molecule type" value="mRNA"/>
</dbReference>
<dbReference type="CCDS" id="CCDS17624.1">
    <molecule id="Q8BVF7-2"/>
</dbReference>
<dbReference type="CCDS" id="CCDS50999.1">
    <molecule id="Q8BVF7-1"/>
</dbReference>
<dbReference type="RefSeq" id="NP_666216.1">
    <molecule id="Q8BVF7-2"/>
    <property type="nucleotide sequence ID" value="NM_146104.3"/>
</dbReference>
<dbReference type="RefSeq" id="NP_666246.1">
    <molecule id="Q8BVF7-1"/>
    <property type="nucleotide sequence ID" value="NM_146134.2"/>
</dbReference>
<dbReference type="SMR" id="Q8BVF7"/>
<dbReference type="BioGRID" id="230528">
    <property type="interactions" value="14"/>
</dbReference>
<dbReference type="ComplexPortal" id="CPX-4234">
    <property type="entry name" value="Gamma-secretase complex, Aph1a-Psen1 variant"/>
</dbReference>
<dbReference type="ComplexPortal" id="CPX-4236">
    <property type="entry name" value="Gamma-secretase complex, Aph1a-Psen2 variant"/>
</dbReference>
<dbReference type="CORUM" id="Q8BVF7"/>
<dbReference type="FunCoup" id="Q8BVF7">
    <property type="interactions" value="1808"/>
</dbReference>
<dbReference type="IntAct" id="Q8BVF7">
    <property type="interactions" value="1"/>
</dbReference>
<dbReference type="MINT" id="Q8BVF7"/>
<dbReference type="STRING" id="10090.ENSMUSP00000058846"/>
<dbReference type="TCDB" id="4.G.1.1.1">
    <property type="family name" value="the Gama-secretase (Gama-secretase) family"/>
</dbReference>
<dbReference type="GlyGen" id="Q8BVF7">
    <property type="glycosylation" value="1 site"/>
</dbReference>
<dbReference type="iPTMnet" id="Q8BVF7"/>
<dbReference type="PhosphoSitePlus" id="Q8BVF7"/>
<dbReference type="SwissPalm" id="Q8BVF7"/>
<dbReference type="PaxDb" id="10090-ENSMUSP00000058846"/>
<dbReference type="ProteomicsDB" id="282134">
    <molecule id="Q8BVF7-1"/>
</dbReference>
<dbReference type="ProteomicsDB" id="282135">
    <molecule id="Q8BVF7-2"/>
</dbReference>
<dbReference type="Pumba" id="Q8BVF7"/>
<dbReference type="Antibodypedia" id="34020">
    <property type="antibodies" value="346 antibodies from 36 providers"/>
</dbReference>
<dbReference type="DNASU" id="226548"/>
<dbReference type="Ensembl" id="ENSMUST00000015894.12">
    <molecule id="Q8BVF7-2"/>
    <property type="protein sequence ID" value="ENSMUSP00000015894.6"/>
    <property type="gene ID" value="ENSMUSG00000015750.16"/>
</dbReference>
<dbReference type="Ensembl" id="ENSMUST00000056710.10">
    <molecule id="Q8BVF7-1"/>
    <property type="protein sequence ID" value="ENSMUSP00000058846.9"/>
    <property type="gene ID" value="ENSMUSG00000015750.16"/>
</dbReference>
<dbReference type="GeneID" id="226548"/>
<dbReference type="KEGG" id="mmu:226548"/>
<dbReference type="UCSC" id="uc008qlq.2">
    <molecule id="Q8BVF7-1"/>
    <property type="organism name" value="mouse"/>
</dbReference>
<dbReference type="AGR" id="MGI:2385110"/>
<dbReference type="CTD" id="51107"/>
<dbReference type="MGI" id="MGI:2385110">
    <property type="gene designation" value="Aph1a"/>
</dbReference>
<dbReference type="VEuPathDB" id="HostDB:ENSMUSG00000015750"/>
<dbReference type="eggNOG" id="KOG3972">
    <property type="taxonomic scope" value="Eukaryota"/>
</dbReference>
<dbReference type="GeneTree" id="ENSGT00390000002049"/>
<dbReference type="HOGENOM" id="CLU_086389_0_0_1"/>
<dbReference type="InParanoid" id="Q8BVF7"/>
<dbReference type="OMA" id="DTNNYLH"/>
<dbReference type="OrthoDB" id="6507463at2759"/>
<dbReference type="PhylomeDB" id="Q8BVF7"/>
<dbReference type="TreeFam" id="TF314362"/>
<dbReference type="Reactome" id="R-MMU-1251985">
    <property type="pathway name" value="Nuclear signaling by ERBB4"/>
</dbReference>
<dbReference type="Reactome" id="R-MMU-193692">
    <property type="pathway name" value="Regulated proteolysis of p75NTR"/>
</dbReference>
<dbReference type="Reactome" id="R-MMU-205043">
    <property type="pathway name" value="NRIF signals cell death from the nucleus"/>
</dbReference>
<dbReference type="Reactome" id="R-MMU-3928665">
    <property type="pathway name" value="EPH-ephrin mediated repulsion of cells"/>
</dbReference>
<dbReference type="Reactome" id="R-MMU-9013507">
    <property type="pathway name" value="NOTCH3 Activation and Transmission of Signal to the Nucleus"/>
</dbReference>
<dbReference type="Reactome" id="R-MMU-9017802">
    <property type="pathway name" value="Noncanonical activation of NOTCH3"/>
</dbReference>
<dbReference type="Reactome" id="R-MMU-9839383">
    <property type="pathway name" value="TGFBR3 PTM regulation"/>
</dbReference>
<dbReference type="BioGRID-ORCS" id="226548">
    <property type="hits" value="3 hits in 75 CRISPR screens"/>
</dbReference>
<dbReference type="PRO" id="PR:Q8BVF7"/>
<dbReference type="Proteomes" id="UP000000589">
    <property type="component" value="Chromosome 3"/>
</dbReference>
<dbReference type="RNAct" id="Q8BVF7">
    <property type="molecule type" value="protein"/>
</dbReference>
<dbReference type="Bgee" id="ENSMUSG00000015750">
    <property type="expression patterns" value="Expressed in ciliary body and 270 other cell types or tissues"/>
</dbReference>
<dbReference type="ExpressionAtlas" id="Q8BVF7">
    <property type="expression patterns" value="baseline and differential"/>
</dbReference>
<dbReference type="GO" id="GO:0005769">
    <property type="term" value="C:early endosome"/>
    <property type="evidence" value="ECO:0007669"/>
    <property type="project" value="Ensembl"/>
</dbReference>
<dbReference type="GO" id="GO:0005783">
    <property type="term" value="C:endoplasmic reticulum"/>
    <property type="evidence" value="ECO:0000250"/>
    <property type="project" value="UniProtKB"/>
</dbReference>
<dbReference type="GO" id="GO:0005789">
    <property type="term" value="C:endoplasmic reticulum membrane"/>
    <property type="evidence" value="ECO:0000303"/>
    <property type="project" value="ComplexPortal"/>
</dbReference>
<dbReference type="GO" id="GO:0070765">
    <property type="term" value="C:gamma-secretase complex"/>
    <property type="evidence" value="ECO:0000314"/>
    <property type="project" value="MGI"/>
</dbReference>
<dbReference type="GO" id="GO:0005794">
    <property type="term" value="C:Golgi apparatus"/>
    <property type="evidence" value="ECO:0000250"/>
    <property type="project" value="UniProtKB"/>
</dbReference>
<dbReference type="GO" id="GO:0032580">
    <property type="term" value="C:Golgi cisterna membrane"/>
    <property type="evidence" value="ECO:0007669"/>
    <property type="project" value="UniProtKB-SubCell"/>
</dbReference>
<dbReference type="GO" id="GO:0000139">
    <property type="term" value="C:Golgi membrane"/>
    <property type="evidence" value="ECO:0000303"/>
    <property type="project" value="ComplexPortal"/>
</dbReference>
<dbReference type="GO" id="GO:0016020">
    <property type="term" value="C:membrane"/>
    <property type="evidence" value="ECO:0000247"/>
    <property type="project" value="MGI"/>
</dbReference>
<dbReference type="GO" id="GO:0005886">
    <property type="term" value="C:plasma membrane"/>
    <property type="evidence" value="ECO:0000250"/>
    <property type="project" value="UniProtKB"/>
</dbReference>
<dbReference type="GO" id="GO:0042734">
    <property type="term" value="C:presynaptic membrane"/>
    <property type="evidence" value="ECO:0007669"/>
    <property type="project" value="Ensembl"/>
</dbReference>
<dbReference type="GO" id="GO:0008021">
    <property type="term" value="C:synaptic vesicle"/>
    <property type="evidence" value="ECO:0007669"/>
    <property type="project" value="Ensembl"/>
</dbReference>
<dbReference type="GO" id="GO:0061133">
    <property type="term" value="F:endopeptidase activator activity"/>
    <property type="evidence" value="ECO:0000315"/>
    <property type="project" value="ARUK-UCL"/>
</dbReference>
<dbReference type="GO" id="GO:0019899">
    <property type="term" value="F:enzyme binding"/>
    <property type="evidence" value="ECO:0000353"/>
    <property type="project" value="ARUK-UCL"/>
</dbReference>
<dbReference type="GO" id="GO:0008233">
    <property type="term" value="F:peptidase activity"/>
    <property type="evidence" value="ECO:0000247"/>
    <property type="project" value="MGI"/>
</dbReference>
<dbReference type="GO" id="GO:0030674">
    <property type="term" value="F:protein-macromolecule adaptor activity"/>
    <property type="evidence" value="ECO:0007669"/>
    <property type="project" value="Ensembl"/>
</dbReference>
<dbReference type="GO" id="GO:0042987">
    <property type="term" value="P:amyloid precursor protein catabolic process"/>
    <property type="evidence" value="ECO:0000266"/>
    <property type="project" value="ComplexPortal"/>
</dbReference>
<dbReference type="GO" id="GO:0034205">
    <property type="term" value="P:amyloid-beta formation"/>
    <property type="evidence" value="ECO:0007669"/>
    <property type="project" value="Ensembl"/>
</dbReference>
<dbReference type="GO" id="GO:0006509">
    <property type="term" value="P:membrane protein ectodomain proteolysis"/>
    <property type="evidence" value="ECO:0000250"/>
    <property type="project" value="UniProtKB"/>
</dbReference>
<dbReference type="GO" id="GO:0031293">
    <property type="term" value="P:membrane protein intracellular domain proteolysis"/>
    <property type="evidence" value="ECO:0000266"/>
    <property type="project" value="ComplexPortal"/>
</dbReference>
<dbReference type="GO" id="GO:0001656">
    <property type="term" value="P:metanephros development"/>
    <property type="evidence" value="ECO:0000315"/>
    <property type="project" value="MGI"/>
</dbReference>
<dbReference type="GO" id="GO:0007220">
    <property type="term" value="P:Notch receptor processing"/>
    <property type="evidence" value="ECO:0000315"/>
    <property type="project" value="MGI"/>
</dbReference>
<dbReference type="GO" id="GO:0007219">
    <property type="term" value="P:Notch signaling pathway"/>
    <property type="evidence" value="ECO:0007669"/>
    <property type="project" value="UniProtKB-KW"/>
</dbReference>
<dbReference type="GO" id="GO:0016485">
    <property type="term" value="P:protein processing"/>
    <property type="evidence" value="ECO:0000315"/>
    <property type="project" value="ARUK-UCL"/>
</dbReference>
<dbReference type="InterPro" id="IPR009294">
    <property type="entry name" value="Aph-1"/>
</dbReference>
<dbReference type="PANTHER" id="PTHR12889">
    <property type="entry name" value="GAMMA-SECRETASE SUBUNIT APH-1"/>
    <property type="match status" value="1"/>
</dbReference>
<dbReference type="Pfam" id="PF06105">
    <property type="entry name" value="Aph-1"/>
    <property type="match status" value="1"/>
</dbReference>
<reference key="1">
    <citation type="journal article" date="2004" name="Genome Res.">
        <title>The status, quality, and expansion of the NIH full-length cDNA project: the Mammalian Gene Collection (MGC).</title>
        <authorList>
            <consortium name="The MGC Project Team"/>
        </authorList>
    </citation>
    <scope>NUCLEOTIDE SEQUENCE [LARGE SCALE MRNA] (ISOFORMS 1 AND 2)</scope>
    <source>
        <tissue>Liver</tissue>
        <tissue>Mammary tumor</tissue>
    </source>
</reference>
<reference key="2">
    <citation type="journal article" date="2005" name="Science">
        <title>The transcriptional landscape of the mammalian genome.</title>
        <authorList>
            <person name="Carninci P."/>
            <person name="Kasukawa T."/>
            <person name="Katayama S."/>
            <person name="Gough J."/>
            <person name="Frith M.C."/>
            <person name="Maeda N."/>
            <person name="Oyama R."/>
            <person name="Ravasi T."/>
            <person name="Lenhard B."/>
            <person name="Wells C."/>
            <person name="Kodzius R."/>
            <person name="Shimokawa K."/>
            <person name="Bajic V.B."/>
            <person name="Brenner S.E."/>
            <person name="Batalov S."/>
            <person name="Forrest A.R."/>
            <person name="Zavolan M."/>
            <person name="Davis M.J."/>
            <person name="Wilming L.G."/>
            <person name="Aidinis V."/>
            <person name="Allen J.E."/>
            <person name="Ambesi-Impiombato A."/>
            <person name="Apweiler R."/>
            <person name="Aturaliya R.N."/>
            <person name="Bailey T.L."/>
            <person name="Bansal M."/>
            <person name="Baxter L."/>
            <person name="Beisel K.W."/>
            <person name="Bersano T."/>
            <person name="Bono H."/>
            <person name="Chalk A.M."/>
            <person name="Chiu K.P."/>
            <person name="Choudhary V."/>
            <person name="Christoffels A."/>
            <person name="Clutterbuck D.R."/>
            <person name="Crowe M.L."/>
            <person name="Dalla E."/>
            <person name="Dalrymple B.P."/>
            <person name="de Bono B."/>
            <person name="Della Gatta G."/>
            <person name="di Bernardo D."/>
            <person name="Down T."/>
            <person name="Engstrom P."/>
            <person name="Fagiolini M."/>
            <person name="Faulkner G."/>
            <person name="Fletcher C.F."/>
            <person name="Fukushima T."/>
            <person name="Furuno M."/>
            <person name="Futaki S."/>
            <person name="Gariboldi M."/>
            <person name="Georgii-Hemming P."/>
            <person name="Gingeras T.R."/>
            <person name="Gojobori T."/>
            <person name="Green R.E."/>
            <person name="Gustincich S."/>
            <person name="Harbers M."/>
            <person name="Hayashi Y."/>
            <person name="Hensch T.K."/>
            <person name="Hirokawa N."/>
            <person name="Hill D."/>
            <person name="Huminiecki L."/>
            <person name="Iacono M."/>
            <person name="Ikeo K."/>
            <person name="Iwama A."/>
            <person name="Ishikawa T."/>
            <person name="Jakt M."/>
            <person name="Kanapin A."/>
            <person name="Katoh M."/>
            <person name="Kawasawa Y."/>
            <person name="Kelso J."/>
            <person name="Kitamura H."/>
            <person name="Kitano H."/>
            <person name="Kollias G."/>
            <person name="Krishnan S.P."/>
            <person name="Kruger A."/>
            <person name="Kummerfeld S.K."/>
            <person name="Kurochkin I.V."/>
            <person name="Lareau L.F."/>
            <person name="Lazarevic D."/>
            <person name="Lipovich L."/>
            <person name="Liu J."/>
            <person name="Liuni S."/>
            <person name="McWilliam S."/>
            <person name="Madan Babu M."/>
            <person name="Madera M."/>
            <person name="Marchionni L."/>
            <person name="Matsuda H."/>
            <person name="Matsuzawa S."/>
            <person name="Miki H."/>
            <person name="Mignone F."/>
            <person name="Miyake S."/>
            <person name="Morris K."/>
            <person name="Mottagui-Tabar S."/>
            <person name="Mulder N."/>
            <person name="Nakano N."/>
            <person name="Nakauchi H."/>
            <person name="Ng P."/>
            <person name="Nilsson R."/>
            <person name="Nishiguchi S."/>
            <person name="Nishikawa S."/>
            <person name="Nori F."/>
            <person name="Ohara O."/>
            <person name="Okazaki Y."/>
            <person name="Orlando V."/>
            <person name="Pang K.C."/>
            <person name="Pavan W.J."/>
            <person name="Pavesi G."/>
            <person name="Pesole G."/>
            <person name="Petrovsky N."/>
            <person name="Piazza S."/>
            <person name="Reed J."/>
            <person name="Reid J.F."/>
            <person name="Ring B.Z."/>
            <person name="Ringwald M."/>
            <person name="Rost B."/>
            <person name="Ruan Y."/>
            <person name="Salzberg S.L."/>
            <person name="Sandelin A."/>
            <person name="Schneider C."/>
            <person name="Schoenbach C."/>
            <person name="Sekiguchi K."/>
            <person name="Semple C.A."/>
            <person name="Seno S."/>
            <person name="Sessa L."/>
            <person name="Sheng Y."/>
            <person name="Shibata Y."/>
            <person name="Shimada H."/>
            <person name="Shimada K."/>
            <person name="Silva D."/>
            <person name="Sinclair B."/>
            <person name="Sperling S."/>
            <person name="Stupka E."/>
            <person name="Sugiura K."/>
            <person name="Sultana R."/>
            <person name="Takenaka Y."/>
            <person name="Taki K."/>
            <person name="Tammoja K."/>
            <person name="Tan S.L."/>
            <person name="Tang S."/>
            <person name="Taylor M.S."/>
            <person name="Tegner J."/>
            <person name="Teichmann S.A."/>
            <person name="Ueda H.R."/>
            <person name="van Nimwegen E."/>
            <person name="Verardo R."/>
            <person name="Wei C.L."/>
            <person name="Yagi K."/>
            <person name="Yamanishi H."/>
            <person name="Zabarovsky E."/>
            <person name="Zhu S."/>
            <person name="Zimmer A."/>
            <person name="Hide W."/>
            <person name="Bult C."/>
            <person name="Grimmond S.M."/>
            <person name="Teasdale R.D."/>
            <person name="Liu E.T."/>
            <person name="Brusic V."/>
            <person name="Quackenbush J."/>
            <person name="Wahlestedt C."/>
            <person name="Mattick J.S."/>
            <person name="Hume D.A."/>
            <person name="Kai C."/>
            <person name="Sasaki D."/>
            <person name="Tomaru Y."/>
            <person name="Fukuda S."/>
            <person name="Kanamori-Katayama M."/>
            <person name="Suzuki M."/>
            <person name="Aoki J."/>
            <person name="Arakawa T."/>
            <person name="Iida J."/>
            <person name="Imamura K."/>
            <person name="Itoh M."/>
            <person name="Kato T."/>
            <person name="Kawaji H."/>
            <person name="Kawagashira N."/>
            <person name="Kawashima T."/>
            <person name="Kojima M."/>
            <person name="Kondo S."/>
            <person name="Konno H."/>
            <person name="Nakano K."/>
            <person name="Ninomiya N."/>
            <person name="Nishio T."/>
            <person name="Okada M."/>
            <person name="Plessy C."/>
            <person name="Shibata K."/>
            <person name="Shiraki T."/>
            <person name="Suzuki S."/>
            <person name="Tagami M."/>
            <person name="Waki K."/>
            <person name="Watahiki A."/>
            <person name="Okamura-Oho Y."/>
            <person name="Suzuki H."/>
            <person name="Kawai J."/>
            <person name="Hayashizaki Y."/>
        </authorList>
    </citation>
    <scope>NUCLEOTIDE SEQUENCE [LARGE SCALE MRNA] OF 97-265 (ISOFORM 2)</scope>
    <source>
        <strain>C57BL/6J</strain>
        <tissue>Cerebellum</tissue>
    </source>
</reference>
<reference key="3">
    <citation type="journal article" date="2005" name="J. Neurosci.">
        <title>APH-1a is the principal mammalian APH-1 isoform present in gamma-secretase complexes during embryonic development.</title>
        <authorList>
            <person name="Ma G."/>
            <person name="Li T."/>
            <person name="Price D.L."/>
            <person name="Wong P.C."/>
        </authorList>
    </citation>
    <scope>FUNCTION</scope>
    <scope>SUBUNIT</scope>
    <scope>DISRUPTION PHENOTYPE</scope>
</reference>
<reference key="4">
    <citation type="journal article" date="2009" name="J. Biol. Chem.">
        <title>APH1 polar transmembrane residues regulate the assembly and activity of presenilin complexes.</title>
        <authorList>
            <person name="Pardossi-Piquard R."/>
            <person name="Yang S.P."/>
            <person name="Kanemoto S."/>
            <person name="Gu Y."/>
            <person name="Chen F."/>
            <person name="Boehm C."/>
            <person name="Sevalle J."/>
            <person name="Li T."/>
            <person name="Wong P.C."/>
            <person name="Checler F."/>
            <person name="Schmitt-Ulms G."/>
            <person name="St George-Hyslop P."/>
            <person name="Fraser P.E."/>
        </authorList>
    </citation>
    <scope>FUNCTION</scope>
    <scope>SUBUNIT</scope>
</reference>
<gene>
    <name type="primary">Aph1a</name>
</gene>